<protein>
    <recommendedName>
        <fullName evidence="1">Aspartyl/glutamyl-tRNA(Asn/Gln) amidotransferase subunit B</fullName>
        <shortName evidence="1">Asp/Glu-ADT subunit B</shortName>
        <ecNumber evidence="1">6.3.5.-</ecNumber>
    </recommendedName>
</protein>
<sequence>MNFQTTIGLEVHVELKTNSKIYSPSPVEYGDQPNANTNVIDWGYPGVLPSLNKGVVRDGIMAGLALHAQIAHHMHFDRKNYFYPDNPKAYQITQSDTPIAHDGWIEIEVNGKKKKIGIKEMHIEEDAGKNTHTSKYSYVDLNRQGTPLIEIVSKPDIASPEEAVAYLEALRQRIQFTGISDVKMEEGSMRVDTNISIRPIGSDKFGTKTEMKNINSFNYVRKALAFEEKRHQKVLMAGGHIGQETRRYDEATGETILMRTKEGSDDYRYFPEPDLPPVNVSDEWISEIESEMPEMPGERREHYVKDLGLTDYDAMVLTQTKEMSDFFEEAVKDGGDPKRVANYLMNDVNSYLNDKQVDLQDTKLTPSNLAGMVKLIEDGTISSKMAKKVFKGILDGEEPNAYAKEHGLVQLSDPAQLQPIVDEVLDNNEQSIEDFKNGKDRAVGYLMGQIMKQTRGKANPQVVTQLLMKSLKAK</sequence>
<reference key="1">
    <citation type="journal article" date="2011" name="PLoS Genet.">
        <title>The evolution of host specialization in the vertebrate gut symbiont Lactobacillus reuteri.</title>
        <authorList>
            <person name="Frese S.A."/>
            <person name="Benson A.K."/>
            <person name="Tannock G.W."/>
            <person name="Loach D.M."/>
            <person name="Kim J."/>
            <person name="Zhang M."/>
            <person name="Oh P.L."/>
            <person name="Heng N.C."/>
            <person name="Patil P.B."/>
            <person name="Juge N."/>
            <person name="Mackenzie D.A."/>
            <person name="Pearson B.M."/>
            <person name="Lapidus A."/>
            <person name="Dalin E."/>
            <person name="Tice H."/>
            <person name="Goltsman E."/>
            <person name="Land M."/>
            <person name="Hauser L."/>
            <person name="Ivanova N."/>
            <person name="Kyrpides N.C."/>
            <person name="Walter J."/>
        </authorList>
    </citation>
    <scope>NUCLEOTIDE SEQUENCE [LARGE SCALE GENOMIC DNA]</scope>
    <source>
        <strain>DSM 20016</strain>
    </source>
</reference>
<evidence type="ECO:0000255" key="1">
    <source>
        <dbReference type="HAMAP-Rule" id="MF_00121"/>
    </source>
</evidence>
<keyword id="KW-0067">ATP-binding</keyword>
<keyword id="KW-0436">Ligase</keyword>
<keyword id="KW-0547">Nucleotide-binding</keyword>
<keyword id="KW-0648">Protein biosynthesis</keyword>
<keyword id="KW-1185">Reference proteome</keyword>
<organism>
    <name type="scientific">Limosilactobacillus reuteri (strain DSM 20016)</name>
    <name type="common">Lactobacillus reuteri</name>
    <dbReference type="NCBI Taxonomy" id="557436"/>
    <lineage>
        <taxon>Bacteria</taxon>
        <taxon>Bacillati</taxon>
        <taxon>Bacillota</taxon>
        <taxon>Bacilli</taxon>
        <taxon>Lactobacillales</taxon>
        <taxon>Lactobacillaceae</taxon>
        <taxon>Limosilactobacillus</taxon>
    </lineage>
</organism>
<name>GATB_LIMRD</name>
<comment type="function">
    <text evidence="1">Allows the formation of correctly charged Asn-tRNA(Asn) or Gln-tRNA(Gln) through the transamidation of misacylated Asp-tRNA(Asn) or Glu-tRNA(Gln) in organisms which lack either or both of asparaginyl-tRNA or glutaminyl-tRNA synthetases. The reaction takes place in the presence of glutamine and ATP through an activated phospho-Asp-tRNA(Asn) or phospho-Glu-tRNA(Gln).</text>
</comment>
<comment type="catalytic activity">
    <reaction evidence="1">
        <text>L-glutamyl-tRNA(Gln) + L-glutamine + ATP + H2O = L-glutaminyl-tRNA(Gln) + L-glutamate + ADP + phosphate + H(+)</text>
        <dbReference type="Rhea" id="RHEA:17521"/>
        <dbReference type="Rhea" id="RHEA-COMP:9681"/>
        <dbReference type="Rhea" id="RHEA-COMP:9684"/>
        <dbReference type="ChEBI" id="CHEBI:15377"/>
        <dbReference type="ChEBI" id="CHEBI:15378"/>
        <dbReference type="ChEBI" id="CHEBI:29985"/>
        <dbReference type="ChEBI" id="CHEBI:30616"/>
        <dbReference type="ChEBI" id="CHEBI:43474"/>
        <dbReference type="ChEBI" id="CHEBI:58359"/>
        <dbReference type="ChEBI" id="CHEBI:78520"/>
        <dbReference type="ChEBI" id="CHEBI:78521"/>
        <dbReference type="ChEBI" id="CHEBI:456216"/>
    </reaction>
</comment>
<comment type="catalytic activity">
    <reaction evidence="1">
        <text>L-aspartyl-tRNA(Asn) + L-glutamine + ATP + H2O = L-asparaginyl-tRNA(Asn) + L-glutamate + ADP + phosphate + 2 H(+)</text>
        <dbReference type="Rhea" id="RHEA:14513"/>
        <dbReference type="Rhea" id="RHEA-COMP:9674"/>
        <dbReference type="Rhea" id="RHEA-COMP:9677"/>
        <dbReference type="ChEBI" id="CHEBI:15377"/>
        <dbReference type="ChEBI" id="CHEBI:15378"/>
        <dbReference type="ChEBI" id="CHEBI:29985"/>
        <dbReference type="ChEBI" id="CHEBI:30616"/>
        <dbReference type="ChEBI" id="CHEBI:43474"/>
        <dbReference type="ChEBI" id="CHEBI:58359"/>
        <dbReference type="ChEBI" id="CHEBI:78515"/>
        <dbReference type="ChEBI" id="CHEBI:78516"/>
        <dbReference type="ChEBI" id="CHEBI:456216"/>
    </reaction>
</comment>
<comment type="subunit">
    <text evidence="1">Heterotrimer of A, B and C subunits.</text>
</comment>
<comment type="similarity">
    <text evidence="1">Belongs to the GatB/GatE family. GatB subfamily.</text>
</comment>
<proteinExistence type="inferred from homology"/>
<accession>A5VLG2</accession>
<dbReference type="EC" id="6.3.5.-" evidence="1"/>
<dbReference type="EMBL" id="CP000705">
    <property type="protein sequence ID" value="ABQ83686.1"/>
    <property type="molecule type" value="Genomic_DNA"/>
</dbReference>
<dbReference type="RefSeq" id="WP_003668754.1">
    <property type="nucleotide sequence ID" value="NC_009513.1"/>
</dbReference>
<dbReference type="SMR" id="A5VLG2"/>
<dbReference type="STRING" id="557436.Lreu_1440"/>
<dbReference type="KEGG" id="lre:Lreu_1440"/>
<dbReference type="PATRIC" id="fig|557436.17.peg.183"/>
<dbReference type="eggNOG" id="COG0064">
    <property type="taxonomic scope" value="Bacteria"/>
</dbReference>
<dbReference type="HOGENOM" id="CLU_019240_0_0_9"/>
<dbReference type="Proteomes" id="UP000001991">
    <property type="component" value="Chromosome"/>
</dbReference>
<dbReference type="GO" id="GO:0050566">
    <property type="term" value="F:asparaginyl-tRNA synthase (glutamine-hydrolyzing) activity"/>
    <property type="evidence" value="ECO:0007669"/>
    <property type="project" value="RHEA"/>
</dbReference>
<dbReference type="GO" id="GO:0005524">
    <property type="term" value="F:ATP binding"/>
    <property type="evidence" value="ECO:0007669"/>
    <property type="project" value="UniProtKB-KW"/>
</dbReference>
<dbReference type="GO" id="GO:0050567">
    <property type="term" value="F:glutaminyl-tRNA synthase (glutamine-hydrolyzing) activity"/>
    <property type="evidence" value="ECO:0007669"/>
    <property type="project" value="UniProtKB-UniRule"/>
</dbReference>
<dbReference type="GO" id="GO:0070681">
    <property type="term" value="P:glutaminyl-tRNAGln biosynthesis via transamidation"/>
    <property type="evidence" value="ECO:0007669"/>
    <property type="project" value="TreeGrafter"/>
</dbReference>
<dbReference type="GO" id="GO:0006412">
    <property type="term" value="P:translation"/>
    <property type="evidence" value="ECO:0007669"/>
    <property type="project" value="UniProtKB-UniRule"/>
</dbReference>
<dbReference type="FunFam" id="1.10.10.410:FF:000001">
    <property type="entry name" value="Aspartyl/glutamyl-tRNA(Asn/Gln) amidotransferase subunit B"/>
    <property type="match status" value="1"/>
</dbReference>
<dbReference type="FunFam" id="1.10.150.380:FF:000001">
    <property type="entry name" value="Aspartyl/glutamyl-tRNA(Asn/Gln) amidotransferase subunit B"/>
    <property type="match status" value="1"/>
</dbReference>
<dbReference type="Gene3D" id="1.10.10.410">
    <property type="match status" value="1"/>
</dbReference>
<dbReference type="Gene3D" id="1.10.150.380">
    <property type="entry name" value="GatB domain, N-terminal subdomain"/>
    <property type="match status" value="1"/>
</dbReference>
<dbReference type="HAMAP" id="MF_00121">
    <property type="entry name" value="GatB"/>
    <property type="match status" value="1"/>
</dbReference>
<dbReference type="InterPro" id="IPR017959">
    <property type="entry name" value="Asn/Gln-tRNA_amidoTrfase_suB/E"/>
</dbReference>
<dbReference type="InterPro" id="IPR006075">
    <property type="entry name" value="Asn/Gln-tRNA_Trfase_suB/E_cat"/>
</dbReference>
<dbReference type="InterPro" id="IPR018027">
    <property type="entry name" value="Asn/Gln_amidotransferase"/>
</dbReference>
<dbReference type="InterPro" id="IPR003789">
    <property type="entry name" value="Asn/Gln_tRNA_amidoTrase-B-like"/>
</dbReference>
<dbReference type="InterPro" id="IPR004413">
    <property type="entry name" value="GatB"/>
</dbReference>
<dbReference type="InterPro" id="IPR042114">
    <property type="entry name" value="GatB_C_1"/>
</dbReference>
<dbReference type="InterPro" id="IPR023168">
    <property type="entry name" value="GatB_Yqey_C_2"/>
</dbReference>
<dbReference type="InterPro" id="IPR017958">
    <property type="entry name" value="Gln-tRNA_amidoTrfase_suB_CS"/>
</dbReference>
<dbReference type="InterPro" id="IPR014746">
    <property type="entry name" value="Gln_synth/guanido_kin_cat_dom"/>
</dbReference>
<dbReference type="NCBIfam" id="TIGR00133">
    <property type="entry name" value="gatB"/>
    <property type="match status" value="1"/>
</dbReference>
<dbReference type="NCBIfam" id="NF004011">
    <property type="entry name" value="PRK05477.1-1"/>
    <property type="match status" value="1"/>
</dbReference>
<dbReference type="NCBIfam" id="NF004012">
    <property type="entry name" value="PRK05477.1-2"/>
    <property type="match status" value="1"/>
</dbReference>
<dbReference type="NCBIfam" id="NF004014">
    <property type="entry name" value="PRK05477.1-4"/>
    <property type="match status" value="1"/>
</dbReference>
<dbReference type="PANTHER" id="PTHR11659">
    <property type="entry name" value="GLUTAMYL-TRNA GLN AMIDOTRANSFERASE SUBUNIT B MITOCHONDRIAL AND PROKARYOTIC PET112-RELATED"/>
    <property type="match status" value="1"/>
</dbReference>
<dbReference type="PANTHER" id="PTHR11659:SF0">
    <property type="entry name" value="GLUTAMYL-TRNA(GLN) AMIDOTRANSFERASE SUBUNIT B, MITOCHONDRIAL"/>
    <property type="match status" value="1"/>
</dbReference>
<dbReference type="Pfam" id="PF02934">
    <property type="entry name" value="GatB_N"/>
    <property type="match status" value="1"/>
</dbReference>
<dbReference type="Pfam" id="PF02637">
    <property type="entry name" value="GatB_Yqey"/>
    <property type="match status" value="1"/>
</dbReference>
<dbReference type="SMART" id="SM00845">
    <property type="entry name" value="GatB_Yqey"/>
    <property type="match status" value="1"/>
</dbReference>
<dbReference type="SUPFAM" id="SSF89095">
    <property type="entry name" value="GatB/YqeY motif"/>
    <property type="match status" value="1"/>
</dbReference>
<dbReference type="SUPFAM" id="SSF55931">
    <property type="entry name" value="Glutamine synthetase/guanido kinase"/>
    <property type="match status" value="1"/>
</dbReference>
<dbReference type="PROSITE" id="PS01234">
    <property type="entry name" value="GATB"/>
    <property type="match status" value="1"/>
</dbReference>
<gene>
    <name evidence="1" type="primary">gatB</name>
    <name type="ordered locus">Lreu_1440</name>
</gene>
<feature type="chain" id="PRO_1000057800" description="Aspartyl/glutamyl-tRNA(Asn/Gln) amidotransferase subunit B">
    <location>
        <begin position="1"/>
        <end position="474"/>
    </location>
</feature>